<proteinExistence type="inferred from homology"/>
<evidence type="ECO:0000255" key="1">
    <source>
        <dbReference type="HAMAP-Rule" id="MF_01576"/>
    </source>
</evidence>
<reference key="1">
    <citation type="journal article" date="2002" name="Nat. Genet.">
        <title>Genome sequence of the endocellular obligate symbiont of tsetse flies, Wigglesworthia glossinidia.</title>
        <authorList>
            <person name="Akman L."/>
            <person name="Yamashita A."/>
            <person name="Watanabe H."/>
            <person name="Oshima K."/>
            <person name="Shiba T."/>
            <person name="Hattori M."/>
            <person name="Aksoy S."/>
        </authorList>
    </citation>
    <scope>NUCLEOTIDE SEQUENCE [LARGE SCALE GENOMIC DNA]</scope>
</reference>
<name>FOLD_WIGBR</name>
<organism>
    <name type="scientific">Wigglesworthia glossinidia brevipalpis</name>
    <dbReference type="NCBI Taxonomy" id="36870"/>
    <lineage>
        <taxon>Bacteria</taxon>
        <taxon>Pseudomonadati</taxon>
        <taxon>Pseudomonadota</taxon>
        <taxon>Gammaproteobacteria</taxon>
        <taxon>Enterobacterales</taxon>
        <taxon>Erwiniaceae</taxon>
        <taxon>Wigglesworthia</taxon>
    </lineage>
</organism>
<gene>
    <name evidence="1" type="primary">folD</name>
    <name type="ordered locus">WIGBR2420</name>
</gene>
<dbReference type="EC" id="1.5.1.5" evidence="1"/>
<dbReference type="EC" id="3.5.4.9" evidence="1"/>
<dbReference type="EMBL" id="BA000021">
    <property type="protein sequence ID" value="BAC24388.1"/>
    <property type="molecule type" value="Genomic_DNA"/>
</dbReference>
<dbReference type="SMR" id="Q8D2W0"/>
<dbReference type="STRING" id="36870.gene:10368735"/>
<dbReference type="KEGG" id="wbr:folD"/>
<dbReference type="eggNOG" id="COG0190">
    <property type="taxonomic scope" value="Bacteria"/>
</dbReference>
<dbReference type="HOGENOM" id="CLU_034045_2_1_6"/>
<dbReference type="OrthoDB" id="9803580at2"/>
<dbReference type="UniPathway" id="UPA00193"/>
<dbReference type="Proteomes" id="UP000000562">
    <property type="component" value="Chromosome"/>
</dbReference>
<dbReference type="GO" id="GO:0005829">
    <property type="term" value="C:cytosol"/>
    <property type="evidence" value="ECO:0007669"/>
    <property type="project" value="TreeGrafter"/>
</dbReference>
<dbReference type="GO" id="GO:0004477">
    <property type="term" value="F:methenyltetrahydrofolate cyclohydrolase activity"/>
    <property type="evidence" value="ECO:0007669"/>
    <property type="project" value="UniProtKB-UniRule"/>
</dbReference>
<dbReference type="GO" id="GO:0004488">
    <property type="term" value="F:methylenetetrahydrofolate dehydrogenase (NADP+) activity"/>
    <property type="evidence" value="ECO:0007669"/>
    <property type="project" value="UniProtKB-UniRule"/>
</dbReference>
<dbReference type="GO" id="GO:0000105">
    <property type="term" value="P:L-histidine biosynthetic process"/>
    <property type="evidence" value="ECO:0007669"/>
    <property type="project" value="UniProtKB-KW"/>
</dbReference>
<dbReference type="GO" id="GO:0009086">
    <property type="term" value="P:methionine biosynthetic process"/>
    <property type="evidence" value="ECO:0007669"/>
    <property type="project" value="UniProtKB-KW"/>
</dbReference>
<dbReference type="GO" id="GO:0006164">
    <property type="term" value="P:purine nucleotide biosynthetic process"/>
    <property type="evidence" value="ECO:0007669"/>
    <property type="project" value="UniProtKB-KW"/>
</dbReference>
<dbReference type="GO" id="GO:0035999">
    <property type="term" value="P:tetrahydrofolate interconversion"/>
    <property type="evidence" value="ECO:0007669"/>
    <property type="project" value="UniProtKB-UniRule"/>
</dbReference>
<dbReference type="CDD" id="cd01080">
    <property type="entry name" value="NAD_bind_m-THF_DH_Cyclohyd"/>
    <property type="match status" value="1"/>
</dbReference>
<dbReference type="FunFam" id="3.40.50.720:FF:000006">
    <property type="entry name" value="Bifunctional protein FolD"/>
    <property type="match status" value="1"/>
</dbReference>
<dbReference type="FunFam" id="3.40.50.10860:FF:000005">
    <property type="entry name" value="C-1-tetrahydrofolate synthase, cytoplasmic, putative"/>
    <property type="match status" value="1"/>
</dbReference>
<dbReference type="Gene3D" id="3.40.50.10860">
    <property type="entry name" value="Leucine Dehydrogenase, chain A, domain 1"/>
    <property type="match status" value="1"/>
</dbReference>
<dbReference type="Gene3D" id="3.40.50.720">
    <property type="entry name" value="NAD(P)-binding Rossmann-like Domain"/>
    <property type="match status" value="1"/>
</dbReference>
<dbReference type="HAMAP" id="MF_01576">
    <property type="entry name" value="THF_DHG_CYH"/>
    <property type="match status" value="1"/>
</dbReference>
<dbReference type="InterPro" id="IPR046346">
    <property type="entry name" value="Aminoacid_DH-like_N_sf"/>
</dbReference>
<dbReference type="InterPro" id="IPR036291">
    <property type="entry name" value="NAD(P)-bd_dom_sf"/>
</dbReference>
<dbReference type="InterPro" id="IPR000672">
    <property type="entry name" value="THF_DH/CycHdrlase"/>
</dbReference>
<dbReference type="InterPro" id="IPR020630">
    <property type="entry name" value="THF_DH/CycHdrlase_cat_dom"/>
</dbReference>
<dbReference type="InterPro" id="IPR020867">
    <property type="entry name" value="THF_DH/CycHdrlase_CS"/>
</dbReference>
<dbReference type="InterPro" id="IPR020631">
    <property type="entry name" value="THF_DH/CycHdrlase_NAD-bd_dom"/>
</dbReference>
<dbReference type="NCBIfam" id="NF008058">
    <property type="entry name" value="PRK10792.1"/>
    <property type="match status" value="1"/>
</dbReference>
<dbReference type="PANTHER" id="PTHR48099:SF5">
    <property type="entry name" value="C-1-TETRAHYDROFOLATE SYNTHASE, CYTOPLASMIC"/>
    <property type="match status" value="1"/>
</dbReference>
<dbReference type="PANTHER" id="PTHR48099">
    <property type="entry name" value="C-1-TETRAHYDROFOLATE SYNTHASE, CYTOPLASMIC-RELATED"/>
    <property type="match status" value="1"/>
</dbReference>
<dbReference type="Pfam" id="PF00763">
    <property type="entry name" value="THF_DHG_CYH"/>
    <property type="match status" value="1"/>
</dbReference>
<dbReference type="Pfam" id="PF02882">
    <property type="entry name" value="THF_DHG_CYH_C"/>
    <property type="match status" value="1"/>
</dbReference>
<dbReference type="PRINTS" id="PR00085">
    <property type="entry name" value="THFDHDRGNASE"/>
</dbReference>
<dbReference type="SUPFAM" id="SSF53223">
    <property type="entry name" value="Aminoacid dehydrogenase-like, N-terminal domain"/>
    <property type="match status" value="1"/>
</dbReference>
<dbReference type="SUPFAM" id="SSF51735">
    <property type="entry name" value="NAD(P)-binding Rossmann-fold domains"/>
    <property type="match status" value="1"/>
</dbReference>
<dbReference type="PROSITE" id="PS00766">
    <property type="entry name" value="THF_DHG_CYH_1"/>
    <property type="match status" value="1"/>
</dbReference>
<dbReference type="PROSITE" id="PS00767">
    <property type="entry name" value="THF_DHG_CYH_2"/>
    <property type="match status" value="1"/>
</dbReference>
<sequence>MIAKVINGKNIAKKIISKINLKIKKYSKLGMRPASLAMINVGNNPASKIYISNKEKICKKIGLISYLYNFSKNISEIDLINLIIKLNKNNLIDGILVQLPLPKEINKLNVLEKIIPKKDVDGFHPYNIGRLCQRKPTIVPCTPKGIIRLLKYYKINLLGLNAVVVGASNIVGRPMSLELLLEGCTVTITHRFTINLKKYIENAELLIVAIGKAEFIPGSWIKPGAIVIDVGINRLKSGKIVGDVNYEDAIEKASYITPVPGGIGPMTIAMLIENTMQIYINNY</sequence>
<feature type="chain" id="PRO_0000268561" description="Bifunctional protein FolD">
    <location>
        <begin position="1"/>
        <end position="283"/>
    </location>
</feature>
<feature type="binding site" evidence="1">
    <location>
        <begin position="166"/>
        <end position="168"/>
    </location>
    <ligand>
        <name>NADP(+)</name>
        <dbReference type="ChEBI" id="CHEBI:58349"/>
    </ligand>
</feature>
<feature type="binding site" evidence="1">
    <location>
        <position position="232"/>
    </location>
    <ligand>
        <name>NADP(+)</name>
        <dbReference type="ChEBI" id="CHEBI:58349"/>
    </ligand>
</feature>
<comment type="function">
    <text evidence="1">Catalyzes the oxidation of 5,10-methylenetetrahydrofolate to 5,10-methenyltetrahydrofolate and then the hydrolysis of 5,10-methenyltetrahydrofolate to 10-formyltetrahydrofolate.</text>
</comment>
<comment type="catalytic activity">
    <reaction evidence="1">
        <text>(6R)-5,10-methylene-5,6,7,8-tetrahydrofolate + NADP(+) = (6R)-5,10-methenyltetrahydrofolate + NADPH</text>
        <dbReference type="Rhea" id="RHEA:22812"/>
        <dbReference type="ChEBI" id="CHEBI:15636"/>
        <dbReference type="ChEBI" id="CHEBI:57455"/>
        <dbReference type="ChEBI" id="CHEBI:57783"/>
        <dbReference type="ChEBI" id="CHEBI:58349"/>
        <dbReference type="EC" id="1.5.1.5"/>
    </reaction>
</comment>
<comment type="catalytic activity">
    <reaction evidence="1">
        <text>(6R)-5,10-methenyltetrahydrofolate + H2O = (6R)-10-formyltetrahydrofolate + H(+)</text>
        <dbReference type="Rhea" id="RHEA:23700"/>
        <dbReference type="ChEBI" id="CHEBI:15377"/>
        <dbReference type="ChEBI" id="CHEBI:15378"/>
        <dbReference type="ChEBI" id="CHEBI:57455"/>
        <dbReference type="ChEBI" id="CHEBI:195366"/>
        <dbReference type="EC" id="3.5.4.9"/>
    </reaction>
</comment>
<comment type="pathway">
    <text evidence="1">One-carbon metabolism; tetrahydrofolate interconversion.</text>
</comment>
<comment type="subunit">
    <text evidence="1">Homodimer.</text>
</comment>
<comment type="similarity">
    <text evidence="1">Belongs to the tetrahydrofolate dehydrogenase/cyclohydrolase family.</text>
</comment>
<accession>Q8D2W0</accession>
<keyword id="KW-0028">Amino-acid biosynthesis</keyword>
<keyword id="KW-0368">Histidine biosynthesis</keyword>
<keyword id="KW-0378">Hydrolase</keyword>
<keyword id="KW-0486">Methionine biosynthesis</keyword>
<keyword id="KW-0511">Multifunctional enzyme</keyword>
<keyword id="KW-0521">NADP</keyword>
<keyword id="KW-0554">One-carbon metabolism</keyword>
<keyword id="KW-0560">Oxidoreductase</keyword>
<keyword id="KW-0658">Purine biosynthesis</keyword>
<keyword id="KW-1185">Reference proteome</keyword>
<protein>
    <recommendedName>
        <fullName evidence="1">Bifunctional protein FolD</fullName>
    </recommendedName>
    <domain>
        <recommendedName>
            <fullName evidence="1">Methylenetetrahydrofolate dehydrogenase</fullName>
            <ecNumber evidence="1">1.5.1.5</ecNumber>
        </recommendedName>
    </domain>
    <domain>
        <recommendedName>
            <fullName evidence="1">Methenyltetrahydrofolate cyclohydrolase</fullName>
            <ecNumber evidence="1">3.5.4.9</ecNumber>
        </recommendedName>
    </domain>
</protein>